<name>TXND3_MOUSE</name>
<proteinExistence type="evidence at transcript level"/>
<organism>
    <name type="scientific">Mus musculus</name>
    <name type="common">Mouse</name>
    <dbReference type="NCBI Taxonomy" id="10090"/>
    <lineage>
        <taxon>Eukaryota</taxon>
        <taxon>Metazoa</taxon>
        <taxon>Chordata</taxon>
        <taxon>Craniata</taxon>
        <taxon>Vertebrata</taxon>
        <taxon>Euteleostomi</taxon>
        <taxon>Mammalia</taxon>
        <taxon>Eutheria</taxon>
        <taxon>Euarchontoglires</taxon>
        <taxon>Glires</taxon>
        <taxon>Rodentia</taxon>
        <taxon>Myomorpha</taxon>
        <taxon>Muroidea</taxon>
        <taxon>Muridae</taxon>
        <taxon>Murinae</taxon>
        <taxon>Mus</taxon>
        <taxon>Mus</taxon>
    </lineage>
</organism>
<reference key="1">
    <citation type="journal article" date="2003" name="J. Biol. Chem.">
        <title>Cloning and developmental analysis of murid spermatid-specific thioredoxin-2 (SPTRX-2), a novel sperm fibrous sheath protein and autoantigen.</title>
        <authorList>
            <person name="Miranda-Vizuete A."/>
            <person name="Tsang K."/>
            <person name="Yu Y."/>
            <person name="Jimenez A."/>
            <person name="Pelto-Huikko M."/>
            <person name="Flickinger C.J."/>
            <person name="Sutovsky P."/>
            <person name="Oko R."/>
        </authorList>
    </citation>
    <scope>NUCLEOTIDE SEQUENCE [MRNA] (ISOFORM 1)</scope>
    <scope>SUBCELLULAR LOCATION</scope>
    <scope>TISSUE SPECIFICITY</scope>
    <source>
        <strain>129/SvJ</strain>
    </source>
</reference>
<reference key="2">
    <citation type="journal article" date="2004" name="Genome Res.">
        <title>The status, quality, and expansion of the NIH full-length cDNA project: the Mammalian Gene Collection (MGC).</title>
        <authorList>
            <consortium name="The MGC Project Team"/>
        </authorList>
    </citation>
    <scope>NUCLEOTIDE SEQUENCE [LARGE SCALE MRNA] (ISOFORM 2)</scope>
    <source>
        <tissue>Testis</tissue>
    </source>
</reference>
<reference key="3">
    <citation type="journal article" date="2005" name="Biochem. Biophys. Res. Commun.">
        <title>Absolute mRNA levels and transcriptional regulation of the mouse testis-specific thioredoxins.</title>
        <authorList>
            <person name="Jimenez A."/>
            <person name="Prieto-Alamo M.J."/>
            <person name="Fuentes-Almagro C.A."/>
            <person name="Jurado J."/>
            <person name="Gustafsson J.-A."/>
            <person name="Pueyo C."/>
            <person name="Miranda-Vizuete A."/>
        </authorList>
    </citation>
    <scope>DEVELOPMENTAL STAGE</scope>
</reference>
<reference key="4">
    <citation type="journal article" date="2013" name="Free Radic. Biol. Med.">
        <title>Functional deletion of Txndc2 and Txndc3 increases the susceptibility of spermatozoa to age-related oxidative stress.</title>
        <authorList>
            <person name="Smith T.B."/>
            <person name="Baker M.A."/>
            <person name="Connaughton H.S."/>
            <person name="Habenicht U."/>
            <person name="Aitken R.J."/>
        </authorList>
    </citation>
    <scope>DISRUPTION PHENOTYPE</scope>
</reference>
<evidence type="ECO:0000250" key="1"/>
<evidence type="ECO:0000250" key="2">
    <source>
        <dbReference type="UniProtKB" id="Q8N427"/>
    </source>
</evidence>
<evidence type="ECO:0000269" key="3">
    <source>
    </source>
</evidence>
<evidence type="ECO:0000269" key="4">
    <source>
    </source>
</evidence>
<evidence type="ECO:0000269" key="5">
    <source>
    </source>
</evidence>
<evidence type="ECO:0000303" key="6">
    <source>
    </source>
</evidence>
<evidence type="ECO:0000303" key="7">
    <source>
    </source>
</evidence>
<evidence type="ECO:0000305" key="8"/>
<comment type="function">
    <text evidence="2">Probably required during the final stages of sperm tail maturation in the testis and/or epididymis, where extensive disulfide bonding of fibrous sheath (FS) proteins occurs. In vitro, it has neither nucleoside diphosphate kinase (NDPK) activity nor reducing activity on disulfide bonds. Exhibits a 3'-5' exonuclease activity with a preference for single-stranded DNA, suggesting roles in DNA proofreading and repair.</text>
</comment>
<comment type="subunit">
    <text evidence="2">Monomer.</text>
</comment>
<comment type="subcellular location">
    <subcellularLocation>
        <location evidence="3">Cytoplasm</location>
    </subcellularLocation>
</comment>
<comment type="alternative products">
    <event type="alternative splicing"/>
    <isoform>
        <id>Q715T0-1</id>
        <name>1</name>
        <sequence type="displayed"/>
    </isoform>
    <isoform>
        <id>Q715T0-2</id>
        <name>2</name>
        <sequence type="described" ref="VSP_014330 VSP_014331"/>
    </isoform>
</comment>
<comment type="tissue specificity">
    <text evidence="3">Testis-specific. Expressed mainly in round spermatids.</text>
</comment>
<comment type="developmental stage">
    <text evidence="4">First expressed after puberty.</text>
</comment>
<comment type="domain">
    <text evidence="8">Contains 3 inactive NDK domains that do not possess all residues considered to be crucial for the NDPK activity.</text>
</comment>
<comment type="disruption phenotype">
    <text evidence="5">Deficient mice display normal reproductive system phenotype.</text>
</comment>
<comment type="similarity">
    <text evidence="8">In the C-terminal section; belongs to the NDK family.</text>
</comment>
<dbReference type="EC" id="3.1.-.-" evidence="2"/>
<dbReference type="EMBL" id="AF548543">
    <property type="protein sequence ID" value="AAQ12343.1"/>
    <property type="molecule type" value="mRNA"/>
</dbReference>
<dbReference type="EMBL" id="BC052356">
    <property type="protein sequence ID" value="AAH52356.1"/>
    <property type="molecule type" value="mRNA"/>
</dbReference>
<dbReference type="CCDS" id="CCDS26262.2">
    <molecule id="Q715T0-1"/>
</dbReference>
<dbReference type="CCDS" id="CCDS49208.1">
    <molecule id="Q715T0-2"/>
</dbReference>
<dbReference type="RefSeq" id="NP_001161381.1">
    <molecule id="Q715T0-2"/>
    <property type="nucleotide sequence ID" value="NM_001167909.1"/>
</dbReference>
<dbReference type="RefSeq" id="NP_853622.2">
    <molecule id="Q715T0-1"/>
    <property type="nucleotide sequence ID" value="NM_181591.3"/>
</dbReference>
<dbReference type="SMR" id="Q715T0"/>
<dbReference type="FunCoup" id="Q715T0">
    <property type="interactions" value="50"/>
</dbReference>
<dbReference type="STRING" id="10090.ENSMUSP00000089358"/>
<dbReference type="PhosphoSitePlus" id="Q715T0"/>
<dbReference type="jPOST" id="Q715T0"/>
<dbReference type="PaxDb" id="10090-ENSMUSP00000089358"/>
<dbReference type="ProteomicsDB" id="298075">
    <molecule id="Q715T0-1"/>
</dbReference>
<dbReference type="ProteomicsDB" id="298076">
    <molecule id="Q715T0-2"/>
</dbReference>
<dbReference type="Antibodypedia" id="12974">
    <property type="antibodies" value="113 antibodies from 26 providers"/>
</dbReference>
<dbReference type="DNASU" id="73412"/>
<dbReference type="Ensembl" id="ENSMUST00000039340.15">
    <molecule id="Q715T0-2"/>
    <property type="protein sequence ID" value="ENSMUSP00000047052.9"/>
    <property type="gene ID" value="ENSMUSG00000041138.17"/>
</dbReference>
<dbReference type="Ensembl" id="ENSMUST00000091763.3">
    <molecule id="Q715T0-1"/>
    <property type="protein sequence ID" value="ENSMUSP00000089358.3"/>
    <property type="gene ID" value="ENSMUSG00000041138.17"/>
</dbReference>
<dbReference type="GeneID" id="73412"/>
<dbReference type="KEGG" id="mmu:73412"/>
<dbReference type="UCSC" id="uc007ppi.1">
    <molecule id="Q715T0-2"/>
    <property type="organism name" value="mouse"/>
</dbReference>
<dbReference type="UCSC" id="uc007ppj.1">
    <molecule id="Q715T0-1"/>
    <property type="organism name" value="mouse"/>
</dbReference>
<dbReference type="AGR" id="MGI:1920662"/>
<dbReference type="CTD" id="51314"/>
<dbReference type="MGI" id="MGI:1920662">
    <property type="gene designation" value="Nme8"/>
</dbReference>
<dbReference type="VEuPathDB" id="HostDB:ENSMUSG00000041138"/>
<dbReference type="eggNOG" id="KOG0888">
    <property type="taxonomic scope" value="Eukaryota"/>
</dbReference>
<dbReference type="eggNOG" id="KOG0907">
    <property type="taxonomic scope" value="Eukaryota"/>
</dbReference>
<dbReference type="GeneTree" id="ENSGT00940000161182"/>
<dbReference type="HOGENOM" id="CLU_016708_0_0_1"/>
<dbReference type="InParanoid" id="Q715T0"/>
<dbReference type="OMA" id="ERQHVSQ"/>
<dbReference type="OrthoDB" id="10263751at2759"/>
<dbReference type="PhylomeDB" id="Q715T0"/>
<dbReference type="TreeFam" id="TF106374"/>
<dbReference type="BioGRID-ORCS" id="73412">
    <property type="hits" value="1 hit in 78 CRISPR screens"/>
</dbReference>
<dbReference type="ChiTaRS" id="Nme8">
    <property type="organism name" value="mouse"/>
</dbReference>
<dbReference type="PRO" id="PR:Q715T0"/>
<dbReference type="Proteomes" id="UP000000589">
    <property type="component" value="Chromosome 13"/>
</dbReference>
<dbReference type="RNAct" id="Q715T0">
    <property type="molecule type" value="protein"/>
</dbReference>
<dbReference type="Bgee" id="ENSMUSG00000041138">
    <property type="expression patterns" value="Expressed in spermatid and 9 other cell types or tissues"/>
</dbReference>
<dbReference type="ExpressionAtlas" id="Q715T0">
    <property type="expression patterns" value="baseline and differential"/>
</dbReference>
<dbReference type="GO" id="GO:0005930">
    <property type="term" value="C:axoneme"/>
    <property type="evidence" value="ECO:0000314"/>
    <property type="project" value="ARUK-UCL"/>
</dbReference>
<dbReference type="GO" id="GO:0005737">
    <property type="term" value="C:cytoplasm"/>
    <property type="evidence" value="ECO:0000314"/>
    <property type="project" value="ARUK-UCL"/>
</dbReference>
<dbReference type="GO" id="GO:0005829">
    <property type="term" value="C:cytosol"/>
    <property type="evidence" value="ECO:0007669"/>
    <property type="project" value="Ensembl"/>
</dbReference>
<dbReference type="GO" id="GO:0016607">
    <property type="term" value="C:nuclear speck"/>
    <property type="evidence" value="ECO:0007669"/>
    <property type="project" value="Ensembl"/>
</dbReference>
<dbReference type="GO" id="GO:0036157">
    <property type="term" value="C:outer dynein arm"/>
    <property type="evidence" value="ECO:0007669"/>
    <property type="project" value="Ensembl"/>
</dbReference>
<dbReference type="GO" id="GO:0097598">
    <property type="term" value="C:sperm cytoplasmic droplet"/>
    <property type="evidence" value="ECO:0000314"/>
    <property type="project" value="MGI"/>
</dbReference>
<dbReference type="GO" id="GO:0035686">
    <property type="term" value="C:sperm fibrous sheath"/>
    <property type="evidence" value="ECO:0000266"/>
    <property type="project" value="MGI"/>
</dbReference>
<dbReference type="GO" id="GO:0097225">
    <property type="term" value="C:sperm midpiece"/>
    <property type="evidence" value="ECO:0007669"/>
    <property type="project" value="Ensembl"/>
</dbReference>
<dbReference type="GO" id="GO:0097228">
    <property type="term" value="C:sperm principal piece"/>
    <property type="evidence" value="ECO:0000314"/>
    <property type="project" value="MGI"/>
</dbReference>
<dbReference type="GO" id="GO:0008408">
    <property type="term" value="F:3'-5' exonuclease activity"/>
    <property type="evidence" value="ECO:0000250"/>
    <property type="project" value="UniProtKB"/>
</dbReference>
<dbReference type="GO" id="GO:0008017">
    <property type="term" value="F:microtubule binding"/>
    <property type="evidence" value="ECO:0007669"/>
    <property type="project" value="Ensembl"/>
</dbReference>
<dbReference type="GO" id="GO:0030154">
    <property type="term" value="P:cell differentiation"/>
    <property type="evidence" value="ECO:0007669"/>
    <property type="project" value="UniProtKB-KW"/>
</dbReference>
<dbReference type="GO" id="GO:0034614">
    <property type="term" value="P:cellular response to reactive oxygen species"/>
    <property type="evidence" value="ECO:0000316"/>
    <property type="project" value="MGI"/>
</dbReference>
<dbReference type="GO" id="GO:0060271">
    <property type="term" value="P:cilium assembly"/>
    <property type="evidence" value="ECO:0007669"/>
    <property type="project" value="Ensembl"/>
</dbReference>
<dbReference type="GO" id="GO:0030317">
    <property type="term" value="P:flagellated sperm motility"/>
    <property type="evidence" value="ECO:0000316"/>
    <property type="project" value="MGI"/>
</dbReference>
<dbReference type="GO" id="GO:0007283">
    <property type="term" value="P:spermatogenesis"/>
    <property type="evidence" value="ECO:0007669"/>
    <property type="project" value="UniProtKB-KW"/>
</dbReference>
<dbReference type="CDD" id="cd04416">
    <property type="entry name" value="NDPk_TX"/>
    <property type="match status" value="1"/>
</dbReference>
<dbReference type="CDD" id="cd02948">
    <property type="entry name" value="TRX_NDPK"/>
    <property type="match status" value="1"/>
</dbReference>
<dbReference type="FunFam" id="3.30.70.141:FF:000012">
    <property type="entry name" value="Thioredoxin domain-containing protein 3"/>
    <property type="match status" value="1"/>
</dbReference>
<dbReference type="Gene3D" id="3.40.30.10">
    <property type="entry name" value="Glutaredoxin"/>
    <property type="match status" value="1"/>
</dbReference>
<dbReference type="Gene3D" id="3.30.70.141">
    <property type="entry name" value="Nucleoside diphosphate kinase-like domain"/>
    <property type="match status" value="3"/>
</dbReference>
<dbReference type="InterPro" id="IPR034907">
    <property type="entry name" value="NDK-like_dom"/>
</dbReference>
<dbReference type="InterPro" id="IPR036850">
    <property type="entry name" value="NDK-like_dom_sf"/>
</dbReference>
<dbReference type="InterPro" id="IPR036249">
    <property type="entry name" value="Thioredoxin-like_sf"/>
</dbReference>
<dbReference type="InterPro" id="IPR017937">
    <property type="entry name" value="Thioredoxin_CS"/>
</dbReference>
<dbReference type="InterPro" id="IPR013766">
    <property type="entry name" value="Thioredoxin_domain"/>
</dbReference>
<dbReference type="InterPro" id="IPR051766">
    <property type="entry name" value="TXND_domain-containing"/>
</dbReference>
<dbReference type="PANTHER" id="PTHR46135">
    <property type="entry name" value="NME/NM23 FAMILY MEMBER 8"/>
    <property type="match status" value="1"/>
</dbReference>
<dbReference type="PANTHER" id="PTHR46135:SF2">
    <property type="entry name" value="THIOREDOXIN DOMAIN-CONTAINING PROTEIN 3"/>
    <property type="match status" value="1"/>
</dbReference>
<dbReference type="Pfam" id="PF00334">
    <property type="entry name" value="NDK"/>
    <property type="match status" value="3"/>
</dbReference>
<dbReference type="Pfam" id="PF00085">
    <property type="entry name" value="Thioredoxin"/>
    <property type="match status" value="1"/>
</dbReference>
<dbReference type="SMART" id="SM00562">
    <property type="entry name" value="NDK"/>
    <property type="match status" value="2"/>
</dbReference>
<dbReference type="SUPFAM" id="SSF54919">
    <property type="entry name" value="Nucleoside diphosphate kinase, NDK"/>
    <property type="match status" value="3"/>
</dbReference>
<dbReference type="SUPFAM" id="SSF52833">
    <property type="entry name" value="Thioredoxin-like"/>
    <property type="match status" value="1"/>
</dbReference>
<dbReference type="PROSITE" id="PS51374">
    <property type="entry name" value="NDPK_LIKE"/>
    <property type="match status" value="3"/>
</dbReference>
<dbReference type="PROSITE" id="PS00194">
    <property type="entry name" value="THIOREDOXIN_1"/>
    <property type="match status" value="1"/>
</dbReference>
<protein>
    <recommendedName>
        <fullName>Thioredoxin domain-containing protein 3</fullName>
    </recommendedName>
    <alternativeName>
        <fullName>3'-5' exonuclease NME8</fullName>
        <ecNumber evidence="2">3.1.-.-</ecNumber>
    </alternativeName>
    <alternativeName>
        <fullName>NME/NM23 family member 8</fullName>
    </alternativeName>
    <alternativeName>
        <fullName evidence="6">Spermatid-specific thioredoxin-2</fullName>
        <shortName evidence="6">Sptrx-2</shortName>
    </alternativeName>
</protein>
<feature type="chain" id="PRO_0000120157" description="Thioredoxin domain-containing protein 3">
    <location>
        <begin position="1"/>
        <end position="586"/>
    </location>
</feature>
<feature type="domain" description="Thioredoxin">
    <location>
        <begin position="10"/>
        <end position="116"/>
    </location>
</feature>
<feature type="region of interest" description="NDK 1" evidence="8">
    <location>
        <begin position="157"/>
        <end position="254"/>
    </location>
</feature>
<feature type="region of interest" description="NDK 2" evidence="8">
    <location>
        <begin position="312"/>
        <end position="452"/>
    </location>
</feature>
<feature type="region of interest" description="NDK 3" evidence="8">
    <location>
        <begin position="453"/>
        <end position="586"/>
    </location>
</feature>
<feature type="disulfide bond" description="Redox-active" evidence="1">
    <location>
        <begin position="39"/>
        <end position="42"/>
    </location>
</feature>
<feature type="splice variant" id="VSP_014330" description="In isoform 2." evidence="7">
    <original>MEILKTI</original>
    <variation>IHRSSRR</variation>
    <location>
        <begin position="464"/>
        <end position="470"/>
    </location>
</feature>
<feature type="splice variant" id="VSP_014331" description="In isoform 2." evidence="7">
    <location>
        <begin position="471"/>
        <end position="586"/>
    </location>
</feature>
<feature type="sequence conflict" description="In Ref. 2; AAH52356." evidence="8" ref="2">
    <original>H</original>
    <variation>Y</variation>
    <location>
        <position position="279"/>
    </location>
</feature>
<feature type="sequence conflict" description="In Ref. 2; AAH52356." evidence="8" ref="2">
    <original>S</original>
    <variation>F</variation>
    <location>
        <position position="294"/>
    </location>
</feature>
<keyword id="KW-0025">Alternative splicing</keyword>
<keyword id="KW-0963">Cytoplasm</keyword>
<keyword id="KW-0217">Developmental protein</keyword>
<keyword id="KW-0221">Differentiation</keyword>
<keyword id="KW-1015">Disulfide bond</keyword>
<keyword id="KW-0378">Hydrolase</keyword>
<keyword id="KW-1185">Reference proteome</keyword>
<keyword id="KW-0677">Repeat</keyword>
<keyword id="KW-0744">Spermatogenesis</keyword>
<sequence>MASKKREVQLQSVVNSQNLWDEMLLNKGLTVIDVYQAWCGPCKAVQSLFRKLKNELNEDEILHFVVAEADNIVTLQPFRDKCEPVFLFSLNGKIIAKIQGANAPLINRKVITLIDEERKIVAGEMDRPQYVEIPLVDAIDEEYGEVQYESAAEVYNMAIIKPDAVLMRKNIEVREKIAKEGFVIEIQENLILPEEVVREFYTHIADQPDFEEFVVSMTNGLSCVLIVSQEDSEVIQEETLPQTDTEEEPGVLEEPHVRFAPVMIKKKRDSLQEYMDRQHMSDYCDVEDDAVKVSKLIDILFPDFKTMKSTNVQTTLALLHPDICEEEKDDVLNVIHNEGFTILMQRQIVLSEEEARTVCKIHENEEYFDNLIGHMTSNHSYVLALRRENGVEYWKTLIGPKTIEEAYASHPQSLCVQFASGNFPTNQFYGSSSKAAAEKEIAHFFPPQSTLALIKPHVTHKERMEILKTIKEAGFELTLMKEMHLTPEHANKIYFKITGKDFYKNVLEVLSLGMSLVMVLTKWNAVAEWRRMVGPVDPEEAKLLSPESLRAKYGLDILRNAVHGASNFSEASEIISNVFTEGNPEN</sequence>
<gene>
    <name type="primary">Nme8</name>
    <name type="synonym">Sptrx2</name>
    <name type="synonym">Txndc3</name>
</gene>
<accession>Q715T0</accession>
<accession>Q80W74</accession>